<organism>
    <name type="scientific">Anoxybacillus flavithermus (strain DSM 21510 / WK1)</name>
    <dbReference type="NCBI Taxonomy" id="491915"/>
    <lineage>
        <taxon>Bacteria</taxon>
        <taxon>Bacillati</taxon>
        <taxon>Bacillota</taxon>
        <taxon>Bacilli</taxon>
        <taxon>Bacillales</taxon>
        <taxon>Anoxybacillaceae</taxon>
        <taxon>Anoxybacillus</taxon>
    </lineage>
</organism>
<proteinExistence type="inferred from homology"/>
<name>SPEH_ANOFW</name>
<keyword id="KW-0068">Autocatalytic cleavage</keyword>
<keyword id="KW-0210">Decarboxylase</keyword>
<keyword id="KW-0456">Lyase</keyword>
<keyword id="KW-0620">Polyamine biosynthesis</keyword>
<keyword id="KW-0670">Pyruvate</keyword>
<keyword id="KW-0949">S-adenosyl-L-methionine</keyword>
<keyword id="KW-0704">Schiff base</keyword>
<keyword id="KW-0745">Spermidine biosynthesis</keyword>
<keyword id="KW-0865">Zymogen</keyword>
<feature type="chain" id="PRO_1000193169" description="S-adenosylmethionine decarboxylase beta chain" evidence="1">
    <location>
        <begin position="1"/>
        <end position="62"/>
    </location>
</feature>
<feature type="chain" id="PRO_1000193170" description="S-adenosylmethionine decarboxylase alpha chain" evidence="1">
    <location>
        <begin position="63"/>
        <end position="124"/>
    </location>
</feature>
<feature type="active site" description="Schiff-base intermediate with substrate; via pyruvic acid" evidence="1">
    <location>
        <position position="63"/>
    </location>
</feature>
<feature type="active site" description="Proton acceptor; for processing activity" evidence="1">
    <location>
        <position position="68"/>
    </location>
</feature>
<feature type="active site" description="Proton donor; for catalytic activity" evidence="1">
    <location>
        <position position="83"/>
    </location>
</feature>
<feature type="site" description="Cleavage (non-hydrolytic); by autolysis" evidence="1">
    <location>
        <begin position="62"/>
        <end position="63"/>
    </location>
</feature>
<feature type="modified residue" description="Pyruvic acid (Ser); by autocatalysis" evidence="1">
    <location>
        <position position="63"/>
    </location>
</feature>
<protein>
    <recommendedName>
        <fullName evidence="1">S-adenosylmethionine decarboxylase proenzyme</fullName>
        <shortName evidence="1">AdoMetDC</shortName>
        <shortName evidence="1">SAMDC</shortName>
        <ecNumber evidence="1">4.1.1.50</ecNumber>
    </recommendedName>
    <component>
        <recommendedName>
            <fullName evidence="1">S-adenosylmethionine decarboxylase beta chain</fullName>
        </recommendedName>
    </component>
    <component>
        <recommendedName>
            <fullName evidence="1">S-adenosylmethionine decarboxylase alpha chain</fullName>
        </recommendedName>
    </component>
</protein>
<accession>B7GGU7</accession>
<gene>
    <name evidence="1" type="primary">speH</name>
    <name type="ordered locus">Aflv_0515</name>
</gene>
<sequence>MDTMGRHVISELWGCDFDKLNDMEFIEKTFVDAALKSGAEIREVAFHKFAPQGVSGVVIISESHLTIHSFPEHGYASIDVYTCGHLDPTIAADYIAEALGAQTRETIELPRGMGPIEIKQAKAL</sequence>
<evidence type="ECO:0000255" key="1">
    <source>
        <dbReference type="HAMAP-Rule" id="MF_00464"/>
    </source>
</evidence>
<comment type="function">
    <text evidence="1">Catalyzes the decarboxylation of S-adenosylmethionine to S-adenosylmethioninamine (dcAdoMet), the propylamine donor required for the synthesis of the polyamines spermine and spermidine from the diamine putrescine.</text>
</comment>
<comment type="catalytic activity">
    <reaction evidence="1">
        <text>S-adenosyl-L-methionine + H(+) = S-adenosyl 3-(methylsulfanyl)propylamine + CO2</text>
        <dbReference type="Rhea" id="RHEA:15981"/>
        <dbReference type="ChEBI" id="CHEBI:15378"/>
        <dbReference type="ChEBI" id="CHEBI:16526"/>
        <dbReference type="ChEBI" id="CHEBI:57443"/>
        <dbReference type="ChEBI" id="CHEBI:59789"/>
        <dbReference type="EC" id="4.1.1.50"/>
    </reaction>
</comment>
<comment type="cofactor">
    <cofactor evidence="1">
        <name>pyruvate</name>
        <dbReference type="ChEBI" id="CHEBI:15361"/>
    </cofactor>
    <text evidence="1">Binds 1 pyruvoyl group covalently per subunit.</text>
</comment>
<comment type="pathway">
    <text evidence="1">Amine and polyamine biosynthesis; S-adenosylmethioninamine biosynthesis; S-adenosylmethioninamine from S-adenosyl-L-methionine: step 1/1.</text>
</comment>
<comment type="subunit">
    <text evidence="1">Heterotetramer of two alpha and two beta chains arranged as a dimer of alpha/beta heterodimers.</text>
</comment>
<comment type="PTM">
    <text evidence="1">Is synthesized initially as an inactive proenzyme. Formation of the active enzyme involves a self-maturation process in which the active site pyruvoyl group is generated from an internal serine residue via an autocatalytic post-translational modification. Two non-identical subunits are generated from the proenzyme in this reaction, and the pyruvate is formed at the N-terminus of the alpha chain, which is derived from the carboxyl end of the proenzyme. The post-translation cleavage follows an unusual pathway, termed non-hydrolytic serinolysis, in which the side chain hydroxyl group of the serine supplies its oxygen atom to form the C-terminus of the beta chain, while the remainder of the serine residue undergoes an oxidative deamination to produce ammonia and the pyruvoyl group blocking the N-terminus of the alpha chain.</text>
</comment>
<comment type="similarity">
    <text evidence="1">Belongs to the prokaryotic AdoMetDC family. Type 1 subfamily.</text>
</comment>
<reference key="1">
    <citation type="journal article" date="2008" name="Genome Biol.">
        <title>Encapsulated in silica: genome, proteome and physiology of the thermophilic bacterium Anoxybacillus flavithermus WK1.</title>
        <authorList>
            <person name="Saw J.H."/>
            <person name="Mountain B.W."/>
            <person name="Feng L."/>
            <person name="Omelchenko M.V."/>
            <person name="Hou S."/>
            <person name="Saito J.A."/>
            <person name="Stott M.B."/>
            <person name="Li D."/>
            <person name="Zhao G."/>
            <person name="Wu J."/>
            <person name="Galperin M.Y."/>
            <person name="Koonin E.V."/>
            <person name="Makarova K.S."/>
            <person name="Wolf Y.I."/>
            <person name="Rigden D.J."/>
            <person name="Dunfield P.F."/>
            <person name="Wang L."/>
            <person name="Alam M."/>
        </authorList>
    </citation>
    <scope>NUCLEOTIDE SEQUENCE [LARGE SCALE GENOMIC DNA]</scope>
    <source>
        <strain>DSM 21510 / WK1</strain>
    </source>
</reference>
<dbReference type="EC" id="4.1.1.50" evidence="1"/>
<dbReference type="EMBL" id="CP000922">
    <property type="protein sequence ID" value="ACJ32899.1"/>
    <property type="molecule type" value="Genomic_DNA"/>
</dbReference>
<dbReference type="SMR" id="B7GGU7"/>
<dbReference type="STRING" id="491915.Aflv_0515"/>
<dbReference type="GeneID" id="7036772"/>
<dbReference type="KEGG" id="afl:Aflv_0515"/>
<dbReference type="eggNOG" id="COG1586">
    <property type="taxonomic scope" value="Bacteria"/>
</dbReference>
<dbReference type="HOGENOM" id="CLU_125470_2_3_9"/>
<dbReference type="UniPathway" id="UPA00331">
    <property type="reaction ID" value="UER00451"/>
</dbReference>
<dbReference type="Proteomes" id="UP000000742">
    <property type="component" value="Chromosome"/>
</dbReference>
<dbReference type="GO" id="GO:0005829">
    <property type="term" value="C:cytosol"/>
    <property type="evidence" value="ECO:0007669"/>
    <property type="project" value="TreeGrafter"/>
</dbReference>
<dbReference type="GO" id="GO:0004014">
    <property type="term" value="F:adenosylmethionine decarboxylase activity"/>
    <property type="evidence" value="ECO:0007669"/>
    <property type="project" value="UniProtKB-UniRule"/>
</dbReference>
<dbReference type="GO" id="GO:0008295">
    <property type="term" value="P:spermidine biosynthetic process"/>
    <property type="evidence" value="ECO:0007669"/>
    <property type="project" value="UniProtKB-UniRule"/>
</dbReference>
<dbReference type="FunFam" id="3.30.160.750:FF:000001">
    <property type="entry name" value="S-adenosylmethionine decarboxylase proenzyme"/>
    <property type="match status" value="1"/>
</dbReference>
<dbReference type="FunFam" id="3.30.360.110:FF:000001">
    <property type="entry name" value="S-adenosylmethionine decarboxylase proenzyme"/>
    <property type="match status" value="1"/>
</dbReference>
<dbReference type="Gene3D" id="3.30.160.750">
    <property type="match status" value="1"/>
</dbReference>
<dbReference type="Gene3D" id="3.30.360.110">
    <property type="entry name" value="S-adenosylmethionine decarboxylase domain"/>
    <property type="match status" value="1"/>
</dbReference>
<dbReference type="HAMAP" id="MF_00464">
    <property type="entry name" value="AdoMetDC_1"/>
    <property type="match status" value="1"/>
</dbReference>
<dbReference type="InterPro" id="IPR042286">
    <property type="entry name" value="AdoMetDC_C"/>
</dbReference>
<dbReference type="InterPro" id="IPR003826">
    <property type="entry name" value="AdoMetDC_fam_prok"/>
</dbReference>
<dbReference type="InterPro" id="IPR042284">
    <property type="entry name" value="AdoMetDC_N"/>
</dbReference>
<dbReference type="InterPro" id="IPR016067">
    <property type="entry name" value="S-AdoMet_deCO2ase_core"/>
</dbReference>
<dbReference type="InterPro" id="IPR017716">
    <property type="entry name" value="S-AdoMet_deCOase_pro-enz"/>
</dbReference>
<dbReference type="NCBIfam" id="TIGR03330">
    <property type="entry name" value="SAM_DCase_Bsu"/>
    <property type="match status" value="1"/>
</dbReference>
<dbReference type="PANTHER" id="PTHR33866">
    <property type="entry name" value="S-ADENOSYLMETHIONINE DECARBOXYLASE PROENZYME"/>
    <property type="match status" value="1"/>
</dbReference>
<dbReference type="PANTHER" id="PTHR33866:SF2">
    <property type="entry name" value="S-ADENOSYLMETHIONINE DECARBOXYLASE PROENZYME"/>
    <property type="match status" value="1"/>
</dbReference>
<dbReference type="Pfam" id="PF02675">
    <property type="entry name" value="AdoMet_dc"/>
    <property type="match status" value="1"/>
</dbReference>
<dbReference type="SUPFAM" id="SSF56276">
    <property type="entry name" value="S-adenosylmethionine decarboxylase"/>
    <property type="match status" value="1"/>
</dbReference>